<comment type="function">
    <text evidence="1">Catalyzes the synthesis of alpha-ribazole-5'-phosphate from nicotinate mononucleotide (NAMN) and 5,6-dimethylbenzimidazole (DMB).</text>
</comment>
<comment type="catalytic activity">
    <reaction evidence="1">
        <text>5,6-dimethylbenzimidazole + nicotinate beta-D-ribonucleotide = alpha-ribazole 5'-phosphate + nicotinate + H(+)</text>
        <dbReference type="Rhea" id="RHEA:11196"/>
        <dbReference type="ChEBI" id="CHEBI:15378"/>
        <dbReference type="ChEBI" id="CHEBI:15890"/>
        <dbReference type="ChEBI" id="CHEBI:32544"/>
        <dbReference type="ChEBI" id="CHEBI:57502"/>
        <dbReference type="ChEBI" id="CHEBI:57918"/>
        <dbReference type="EC" id="2.4.2.21"/>
    </reaction>
</comment>
<comment type="pathway">
    <text evidence="1">Nucleoside biosynthesis; alpha-ribazole biosynthesis; alpha-ribazole from 5,6-dimethylbenzimidazole: step 1/2.</text>
</comment>
<comment type="similarity">
    <text evidence="1">Belongs to the CobT family.</text>
</comment>
<protein>
    <recommendedName>
        <fullName evidence="1">Nicotinate-nucleotide--dimethylbenzimidazole phosphoribosyltransferase</fullName>
        <shortName evidence="1">NN:DBI PRT</shortName>
        <ecNumber evidence="1">2.4.2.21</ecNumber>
    </recommendedName>
    <alternativeName>
        <fullName evidence="1">N(1)-alpha-phosphoribosyltransferase</fullName>
    </alternativeName>
</protein>
<proteinExistence type="inferred from homology"/>
<evidence type="ECO:0000255" key="1">
    <source>
        <dbReference type="HAMAP-Rule" id="MF_00230"/>
    </source>
</evidence>
<name>COBT_BRUSI</name>
<dbReference type="EC" id="2.4.2.21" evidence="1"/>
<dbReference type="EMBL" id="CP000911">
    <property type="protein sequence ID" value="ABY37972.1"/>
    <property type="molecule type" value="Genomic_DNA"/>
</dbReference>
<dbReference type="RefSeq" id="WP_004690777.1">
    <property type="nucleotide sequence ID" value="NC_010169.1"/>
</dbReference>
<dbReference type="SMR" id="B0CLJ2"/>
<dbReference type="GeneID" id="55590573"/>
<dbReference type="KEGG" id="bmt:BSUIS_A0905"/>
<dbReference type="HOGENOM" id="CLU_002982_0_1_5"/>
<dbReference type="UniPathway" id="UPA00061">
    <property type="reaction ID" value="UER00516"/>
</dbReference>
<dbReference type="Proteomes" id="UP000008545">
    <property type="component" value="Chromosome I"/>
</dbReference>
<dbReference type="GO" id="GO:0008939">
    <property type="term" value="F:nicotinate-nucleotide-dimethylbenzimidazole phosphoribosyltransferase activity"/>
    <property type="evidence" value="ECO:0007669"/>
    <property type="project" value="UniProtKB-UniRule"/>
</dbReference>
<dbReference type="GO" id="GO:0009236">
    <property type="term" value="P:cobalamin biosynthetic process"/>
    <property type="evidence" value="ECO:0007669"/>
    <property type="project" value="UniProtKB-KW"/>
</dbReference>
<dbReference type="CDD" id="cd02439">
    <property type="entry name" value="DMB-PRT_CobT"/>
    <property type="match status" value="1"/>
</dbReference>
<dbReference type="Gene3D" id="1.10.1610.10">
    <property type="match status" value="1"/>
</dbReference>
<dbReference type="Gene3D" id="3.40.50.10210">
    <property type="match status" value="1"/>
</dbReference>
<dbReference type="HAMAP" id="MF_00230">
    <property type="entry name" value="CobT"/>
    <property type="match status" value="1"/>
</dbReference>
<dbReference type="InterPro" id="IPR003200">
    <property type="entry name" value="Nict_dMeBzImd_PRibTrfase"/>
</dbReference>
<dbReference type="InterPro" id="IPR017846">
    <property type="entry name" value="Nict_dMeBzImd_PRibTrfase_bact"/>
</dbReference>
<dbReference type="InterPro" id="IPR023195">
    <property type="entry name" value="Nict_dMeBzImd_PRibTrfase_N"/>
</dbReference>
<dbReference type="InterPro" id="IPR036087">
    <property type="entry name" value="Nict_dMeBzImd_PRibTrfase_sf"/>
</dbReference>
<dbReference type="NCBIfam" id="TIGR03160">
    <property type="entry name" value="cobT_DBIPRT"/>
    <property type="match status" value="1"/>
</dbReference>
<dbReference type="NCBIfam" id="NF000996">
    <property type="entry name" value="PRK00105.1"/>
    <property type="match status" value="1"/>
</dbReference>
<dbReference type="PANTHER" id="PTHR43463">
    <property type="entry name" value="NICOTINATE-NUCLEOTIDE--DIMETHYLBENZIMIDAZOLE PHOSPHORIBOSYLTRANSFERASE"/>
    <property type="match status" value="1"/>
</dbReference>
<dbReference type="PANTHER" id="PTHR43463:SF1">
    <property type="entry name" value="NICOTINATE-NUCLEOTIDE--DIMETHYLBENZIMIDAZOLE PHOSPHORIBOSYLTRANSFERASE"/>
    <property type="match status" value="1"/>
</dbReference>
<dbReference type="Pfam" id="PF02277">
    <property type="entry name" value="DBI_PRT"/>
    <property type="match status" value="1"/>
</dbReference>
<dbReference type="SUPFAM" id="SSF52733">
    <property type="entry name" value="Nicotinate mononucleotide:5,6-dimethylbenzimidazole phosphoribosyltransferase (CobT)"/>
    <property type="match status" value="1"/>
</dbReference>
<reference key="1">
    <citation type="submission" date="2007-12" db="EMBL/GenBank/DDBJ databases">
        <title>Brucella suis ATCC 23445 whole genome shotgun sequencing project.</title>
        <authorList>
            <person name="Setubal J.C."/>
            <person name="Bowns C."/>
            <person name="Boyle S."/>
            <person name="Crasta O.R."/>
            <person name="Czar M.J."/>
            <person name="Dharmanolla C."/>
            <person name="Gillespie J.J."/>
            <person name="Kenyon R.W."/>
            <person name="Lu J."/>
            <person name="Mane S."/>
            <person name="Mohapatra S."/>
            <person name="Nagrani S."/>
            <person name="Purkayastha A."/>
            <person name="Rajasimha H.K."/>
            <person name="Shallom J.M."/>
            <person name="Shallom S."/>
            <person name="Shukla M."/>
            <person name="Snyder E.E."/>
            <person name="Sobral B.W."/>
            <person name="Wattam A.R."/>
            <person name="Will R."/>
            <person name="Williams K."/>
            <person name="Yoo H."/>
            <person name="Bruce D."/>
            <person name="Detter C."/>
            <person name="Munk C."/>
            <person name="Brettin T.S."/>
        </authorList>
    </citation>
    <scope>NUCLEOTIDE SEQUENCE [LARGE SCALE GENOMIC DNA]</scope>
    <source>
        <strain>ATCC 23445 / NCTC 10510</strain>
    </source>
</reference>
<accession>B0CLJ2</accession>
<keyword id="KW-0169">Cobalamin biosynthesis</keyword>
<keyword id="KW-0328">Glycosyltransferase</keyword>
<keyword id="KW-0808">Transferase</keyword>
<gene>
    <name evidence="1" type="primary">cobT</name>
    <name type="ordered locus">BSUIS_A0905</name>
</gene>
<sequence>MSASGLPFDDFRELIRNLPGPDLGAERAVREREVTLTKPAGSLGRLEEIVAWLATWTGKRTPQVNRPLVAVFAGNHGVTAKNITPFPPSVTAQMVENFAAGGAAINQICIANDLGLKVFDLALEHPTGDITEEAAMDERTCAATMAFGMEAIAGGTDLLCIGEMGIGNTTIAAAIALALFGGTAEDWVGPGTGSTGELMQRKLAAVRQAVALHQPHLQDPLEVLRCLGGREIAAMAGAILAARMEKIPVIVDGFVASAAAAVLYAANPEAIDHCMFGHVSAEPGHRKLLAKMGKEPLLDLGMRLGEGTGAALAANIVKAAALCHSGMATFEQAGVSASK</sequence>
<organism>
    <name type="scientific">Brucella suis (strain ATCC 23445 / NCTC 10510)</name>
    <dbReference type="NCBI Taxonomy" id="470137"/>
    <lineage>
        <taxon>Bacteria</taxon>
        <taxon>Pseudomonadati</taxon>
        <taxon>Pseudomonadota</taxon>
        <taxon>Alphaproteobacteria</taxon>
        <taxon>Hyphomicrobiales</taxon>
        <taxon>Brucellaceae</taxon>
        <taxon>Brucella/Ochrobactrum group</taxon>
        <taxon>Brucella</taxon>
    </lineage>
</organism>
<feature type="chain" id="PRO_1000078239" description="Nicotinate-nucleotide--dimethylbenzimidazole phosphoribosyltransferase">
    <location>
        <begin position="1"/>
        <end position="339"/>
    </location>
</feature>
<feature type="active site" description="Proton acceptor" evidence="1">
    <location>
        <position position="306"/>
    </location>
</feature>